<gene>
    <name type="primary">MFB2</name>
</gene>
<sequence length="132" mass="14212">MSYLGKVYSLVKQENFDGFLKSAGLSDDKIQALVSDKPTQKMEANGDSYSITSTGIGGERTVSFKSGVEFDDVIGAGESVKSMYTVDGNVVTHVVKGDAGVATFKKEYNGDDLVVTITSSNWDGVARRYYKA</sequence>
<organism>
    <name type="scientific">Manduca sexta</name>
    <name type="common">Tobacco hawkmoth</name>
    <name type="synonym">Tobacco hornworm</name>
    <dbReference type="NCBI Taxonomy" id="7130"/>
    <lineage>
        <taxon>Eukaryota</taxon>
        <taxon>Metazoa</taxon>
        <taxon>Ecdysozoa</taxon>
        <taxon>Arthropoda</taxon>
        <taxon>Hexapoda</taxon>
        <taxon>Insecta</taxon>
        <taxon>Pterygota</taxon>
        <taxon>Neoptera</taxon>
        <taxon>Endopterygota</taxon>
        <taxon>Lepidoptera</taxon>
        <taxon>Glossata</taxon>
        <taxon>Ditrysia</taxon>
        <taxon>Bombycoidea</taxon>
        <taxon>Sphingidae</taxon>
        <taxon>Sphinginae</taxon>
        <taxon>Sphingini</taxon>
        <taxon>Manduca</taxon>
    </lineage>
</organism>
<comment type="function">
    <text>Binds fatty acids in a 1:1 molar ratio.</text>
</comment>
<comment type="subunit">
    <text evidence="1">Monomer.</text>
</comment>
<comment type="subcellular location">
    <subcellularLocation>
        <location>Cytoplasm</location>
    </subcellularLocation>
</comment>
<comment type="tissue specificity">
    <text>Midgut.</text>
</comment>
<comment type="domain">
    <text>Forms a beta-barrel structure that accommodates hydrophobic ligands in its interior.</text>
</comment>
<comment type="similarity">
    <text evidence="2">Belongs to the calycin superfamily. Fatty-acid binding protein (FABP) family.</text>
</comment>
<evidence type="ECO:0000269" key="1">
    <source>
    </source>
</evidence>
<evidence type="ECO:0000305" key="2"/>
<evidence type="ECO:0007744" key="3">
    <source>
        <dbReference type="PDB" id="1MDC"/>
    </source>
</evidence>
<evidence type="ECO:0007829" key="4">
    <source>
        <dbReference type="PDB" id="1MDC"/>
    </source>
</evidence>
<reference key="1">
    <citation type="journal article" date="1992" name="J. Biol. Chem.">
        <title>Isolation, characterization, and cDNA sequence of two fatty acid-binding proteins from the midgut of Manduca sexta larvae.</title>
        <authorList>
            <person name="Smith A.F."/>
            <person name="Tsuchida K."/>
            <person name="Hanneman E."/>
            <person name="Suzuki T.C."/>
            <person name="Wells M.A."/>
        </authorList>
    </citation>
    <scope>NUCLEOTIDE SEQUENCE [MRNA]</scope>
    <source>
        <tissue>Midgut</tissue>
    </source>
</reference>
<reference key="2">
    <citation type="journal article" date="1992" name="J. Mol. Biol.">
        <title>Crystallization, structure determination and least-squares refinement to 1.75-A resolution of the fatty-acid-binding protein isolated from Manduca sexta L.</title>
        <authorList>
            <person name="Benning M.M."/>
            <person name="Smith A.F."/>
            <person name="Wells M.A."/>
            <person name="Holden H.M."/>
        </authorList>
    </citation>
    <scope>X-RAY CRYSTALLOGRAPHY (1.75 ANGSTROMS) IN COMPLEX WITH PALMITATE</scope>
    <scope>ACETYLATION AT SER-2</scope>
</reference>
<feature type="initiator methionine" description="Removed">
    <location>
        <position position="1"/>
    </location>
</feature>
<feature type="chain" id="PRO_0000067361" description="Fatty acid-binding protein 2">
    <location>
        <begin position="2"/>
        <end position="132"/>
    </location>
</feature>
<feature type="binding site" evidence="1 3">
    <location>
        <position position="40"/>
    </location>
    <ligand>
        <name>hexadecanoate</name>
        <dbReference type="ChEBI" id="CHEBI:7896"/>
    </ligand>
</feature>
<feature type="binding site" evidence="1 3">
    <location>
        <begin position="128"/>
        <end position="130"/>
    </location>
    <ligand>
        <name>hexadecanoate</name>
        <dbReference type="ChEBI" id="CHEBI:7896"/>
    </ligand>
</feature>
<feature type="modified residue" description="N-acetylserine" evidence="1">
    <location>
        <position position="2"/>
    </location>
</feature>
<feature type="strand" evidence="4">
    <location>
        <begin position="8"/>
        <end position="15"/>
    </location>
</feature>
<feature type="helix" evidence="4">
    <location>
        <begin position="16"/>
        <end position="21"/>
    </location>
</feature>
<feature type="turn" evidence="4">
    <location>
        <begin position="22"/>
        <end position="24"/>
    </location>
</feature>
<feature type="helix" evidence="4">
    <location>
        <begin position="27"/>
        <end position="35"/>
    </location>
</feature>
<feature type="strand" evidence="4">
    <location>
        <begin position="39"/>
        <end position="45"/>
    </location>
</feature>
<feature type="strand" evidence="4">
    <location>
        <begin position="48"/>
        <end position="55"/>
    </location>
</feature>
<feature type="strand" evidence="4">
    <location>
        <begin position="60"/>
        <end position="64"/>
    </location>
</feature>
<feature type="strand" evidence="4">
    <location>
        <begin position="70"/>
        <end position="74"/>
    </location>
</feature>
<feature type="turn" evidence="4">
    <location>
        <begin position="75"/>
        <end position="77"/>
    </location>
</feature>
<feature type="strand" evidence="4">
    <location>
        <begin position="78"/>
        <end position="87"/>
    </location>
</feature>
<feature type="strand" evidence="4">
    <location>
        <begin position="90"/>
        <end position="97"/>
    </location>
</feature>
<feature type="strand" evidence="4">
    <location>
        <begin position="100"/>
        <end position="109"/>
    </location>
</feature>
<feature type="strand" evidence="4">
    <location>
        <begin position="112"/>
        <end position="119"/>
    </location>
</feature>
<feature type="strand" evidence="4">
    <location>
        <begin position="122"/>
        <end position="131"/>
    </location>
</feature>
<name>FABP2_MANSE</name>
<protein>
    <recommendedName>
        <fullName>Fatty acid-binding protein 2</fullName>
        <shortName>FABP 2</shortName>
    </recommendedName>
</protein>
<proteinExistence type="evidence at protein level"/>
<accession>P31417</accession>
<dbReference type="EMBL" id="M77755">
    <property type="protein sequence ID" value="AAA29314.1"/>
    <property type="molecule type" value="mRNA"/>
</dbReference>
<dbReference type="PIR" id="B41749">
    <property type="entry name" value="B41749"/>
</dbReference>
<dbReference type="PDB" id="1MDC">
    <property type="method" value="X-ray"/>
    <property type="resolution" value="1.75 A"/>
    <property type="chains" value="A=2-132"/>
</dbReference>
<dbReference type="PDBsum" id="1MDC"/>
<dbReference type="SMR" id="P31417"/>
<dbReference type="iPTMnet" id="P31417"/>
<dbReference type="OrthoDB" id="354351at2759"/>
<dbReference type="EvolutionaryTrace" id="P31417"/>
<dbReference type="GO" id="GO:0005737">
    <property type="term" value="C:cytoplasm"/>
    <property type="evidence" value="ECO:0007669"/>
    <property type="project" value="UniProtKB-SubCell"/>
</dbReference>
<dbReference type="GO" id="GO:0008289">
    <property type="term" value="F:lipid binding"/>
    <property type="evidence" value="ECO:0007669"/>
    <property type="project" value="UniProtKB-KW"/>
</dbReference>
<dbReference type="CDD" id="cd19448">
    <property type="entry name" value="FABP_pancrustacea"/>
    <property type="match status" value="1"/>
</dbReference>
<dbReference type="Gene3D" id="2.40.128.20">
    <property type="match status" value="1"/>
</dbReference>
<dbReference type="InterPro" id="IPR012674">
    <property type="entry name" value="Calycin"/>
</dbReference>
<dbReference type="InterPro" id="IPR000463">
    <property type="entry name" value="Fatty_acid-bd"/>
</dbReference>
<dbReference type="InterPro" id="IPR031259">
    <property type="entry name" value="ILBP"/>
</dbReference>
<dbReference type="InterPro" id="IPR000566">
    <property type="entry name" value="Lipocln_cytosolic_FA-bd_dom"/>
</dbReference>
<dbReference type="PANTHER" id="PTHR11955">
    <property type="entry name" value="FATTY ACID BINDING PROTEIN"/>
    <property type="match status" value="1"/>
</dbReference>
<dbReference type="Pfam" id="PF00061">
    <property type="entry name" value="Lipocalin"/>
    <property type="match status" value="1"/>
</dbReference>
<dbReference type="PRINTS" id="PR00178">
    <property type="entry name" value="FATTYACIDBP"/>
</dbReference>
<dbReference type="SUPFAM" id="SSF50814">
    <property type="entry name" value="Lipocalins"/>
    <property type="match status" value="1"/>
</dbReference>
<dbReference type="PROSITE" id="PS00214">
    <property type="entry name" value="FABP"/>
    <property type="match status" value="1"/>
</dbReference>
<keyword id="KW-0002">3D-structure</keyword>
<keyword id="KW-0007">Acetylation</keyword>
<keyword id="KW-0963">Cytoplasm</keyword>
<keyword id="KW-0446">Lipid-binding</keyword>
<keyword id="KW-0813">Transport</keyword>